<protein>
    <recommendedName>
        <fullName evidence="1">Proline--tRNA ligase 2</fullName>
        <ecNumber evidence="1">6.1.1.15</ecNumber>
    </recommendedName>
    <alternativeName>
        <fullName evidence="1">Prolyl-tRNA synthetase 2</fullName>
        <shortName evidence="1">ProRS 2</shortName>
    </alternativeName>
</protein>
<gene>
    <name evidence="1" type="primary">proS2</name>
    <name type="ordered locus">BA_0396</name>
    <name type="ordered locus">GBAA_0396</name>
    <name type="ordered locus">BAS0382</name>
</gene>
<name>SYP2_BACAN</name>
<comment type="function">
    <text evidence="1">Catalyzes the attachment of proline to tRNA(Pro) in a two-step reaction: proline is first activated by ATP to form Pro-AMP and then transferred to the acceptor end of tRNA(Pro).</text>
</comment>
<comment type="catalytic activity">
    <reaction evidence="1">
        <text>tRNA(Pro) + L-proline + ATP = L-prolyl-tRNA(Pro) + AMP + diphosphate</text>
        <dbReference type="Rhea" id="RHEA:14305"/>
        <dbReference type="Rhea" id="RHEA-COMP:9700"/>
        <dbReference type="Rhea" id="RHEA-COMP:9702"/>
        <dbReference type="ChEBI" id="CHEBI:30616"/>
        <dbReference type="ChEBI" id="CHEBI:33019"/>
        <dbReference type="ChEBI" id="CHEBI:60039"/>
        <dbReference type="ChEBI" id="CHEBI:78442"/>
        <dbReference type="ChEBI" id="CHEBI:78532"/>
        <dbReference type="ChEBI" id="CHEBI:456215"/>
        <dbReference type="EC" id="6.1.1.15"/>
    </reaction>
</comment>
<comment type="subunit">
    <text evidence="1">Homodimer.</text>
</comment>
<comment type="subcellular location">
    <subcellularLocation>
        <location evidence="1">Cytoplasm</location>
    </subcellularLocation>
</comment>
<comment type="domain">
    <text evidence="1">Consists of three domains: the N-terminal catalytic domain, the anticodon-binding domain and the C-terminal extension.</text>
</comment>
<comment type="similarity">
    <text evidence="1">Belongs to the class-II aminoacyl-tRNA synthetase family. ProS type 3 subfamily.</text>
</comment>
<keyword id="KW-0030">Aminoacyl-tRNA synthetase</keyword>
<keyword id="KW-0067">ATP-binding</keyword>
<keyword id="KW-0963">Cytoplasm</keyword>
<keyword id="KW-0436">Ligase</keyword>
<keyword id="KW-0547">Nucleotide-binding</keyword>
<keyword id="KW-0648">Protein biosynthesis</keyword>
<keyword id="KW-1185">Reference proteome</keyword>
<proteinExistence type="inferred from homology"/>
<evidence type="ECO:0000255" key="1">
    <source>
        <dbReference type="HAMAP-Rule" id="MF_01571"/>
    </source>
</evidence>
<organism>
    <name type="scientific">Bacillus anthracis</name>
    <dbReference type="NCBI Taxonomy" id="1392"/>
    <lineage>
        <taxon>Bacteria</taxon>
        <taxon>Bacillati</taxon>
        <taxon>Bacillota</taxon>
        <taxon>Bacilli</taxon>
        <taxon>Bacillales</taxon>
        <taxon>Bacillaceae</taxon>
        <taxon>Bacillus</taxon>
        <taxon>Bacillus cereus group</taxon>
    </lineage>
</organism>
<sequence length="508" mass="58478">MAKEQVQAITKMEEDFAQWYTDIVKKAELVDYSSVKGCMILRPYGYALWENMQKVMDEKLKATGHENVYMPMFIPESLLQKEKDHVEGFAPEVAWVTHGGDEKLAERLCVRPTSETLFCEHFSKIVQSYNDLPKLYNQWCSVVRWEKTTRPFLRTTEFLWQEGHTIHETAEESQAETLNILNLYASFCEDYLAIPVIKGQKTEKEKFAGAKATYTIESLMHDGKALQTGTSHNFGTNFSEAFDIKFLDRNGKWQYVHQTSWGVSTRMIGGLIMVHSDNNGLVMPPKVAPVQVVIVPIAQHKEGVLAKATELQGHIQKVARVKIDASNKTPGWKFNEYEMKGIPIRLEVGPKDIEKNQVVLVRRDTKEKEFISMDQLEERIPALLEEIHNSLFNKAKVFRDENTYSVTNFEEMKKLADEKQGFIKAMWCGELACEEKLKEEVASRCMPFEQEHLAEECVCCVNKWCIGEKRINALLDRKDEKDFGLHNKCNPKSFLVLQFVSCIFKMEG</sequence>
<accession>Q81Z76</accession>
<accession>Q6I418</accession>
<accession>Q6KXS9</accession>
<feature type="chain" id="PRO_0000249116" description="Proline--tRNA ligase 2">
    <location>
        <begin position="1"/>
        <end position="508"/>
    </location>
</feature>
<dbReference type="EC" id="6.1.1.15" evidence="1"/>
<dbReference type="EMBL" id="AE016879">
    <property type="protein sequence ID" value="AAP24426.1"/>
    <property type="molecule type" value="Genomic_DNA"/>
</dbReference>
<dbReference type="EMBL" id="AE017225">
    <property type="protein sequence ID" value="AAT52713.1"/>
    <property type="molecule type" value="Genomic_DNA"/>
</dbReference>
<dbReference type="EMBL" id="AE017334">
    <property type="protein sequence ID" value="AAT29491.1"/>
    <property type="molecule type" value="Genomic_DNA"/>
</dbReference>
<dbReference type="RefSeq" id="NP_842940.1">
    <property type="nucleotide sequence ID" value="NC_003997.3"/>
</dbReference>
<dbReference type="RefSeq" id="YP_026662.1">
    <property type="nucleotide sequence ID" value="NC_005945.1"/>
</dbReference>
<dbReference type="SMR" id="Q81Z76"/>
<dbReference type="IntAct" id="Q81Z76">
    <property type="interactions" value="1"/>
</dbReference>
<dbReference type="STRING" id="261594.GBAA_0396"/>
<dbReference type="DNASU" id="1086703"/>
<dbReference type="KEGG" id="ban:BA_0396"/>
<dbReference type="KEGG" id="bar:GBAA_0396"/>
<dbReference type="KEGG" id="bat:BAS0382"/>
<dbReference type="PATRIC" id="fig|198094.11.peg.391"/>
<dbReference type="eggNOG" id="COG0441">
    <property type="taxonomic scope" value="Bacteria"/>
</dbReference>
<dbReference type="HOGENOM" id="CLU_001882_4_2_9"/>
<dbReference type="OMA" id="EVYWVTH"/>
<dbReference type="OrthoDB" id="9809052at2"/>
<dbReference type="Proteomes" id="UP000000427">
    <property type="component" value="Chromosome"/>
</dbReference>
<dbReference type="Proteomes" id="UP000000594">
    <property type="component" value="Chromosome"/>
</dbReference>
<dbReference type="GO" id="GO:0017101">
    <property type="term" value="C:aminoacyl-tRNA synthetase multienzyme complex"/>
    <property type="evidence" value="ECO:0007669"/>
    <property type="project" value="TreeGrafter"/>
</dbReference>
<dbReference type="GO" id="GO:0005737">
    <property type="term" value="C:cytoplasm"/>
    <property type="evidence" value="ECO:0007669"/>
    <property type="project" value="UniProtKB-SubCell"/>
</dbReference>
<dbReference type="GO" id="GO:0005524">
    <property type="term" value="F:ATP binding"/>
    <property type="evidence" value="ECO:0007669"/>
    <property type="project" value="UniProtKB-UniRule"/>
</dbReference>
<dbReference type="GO" id="GO:0140096">
    <property type="term" value="F:catalytic activity, acting on a protein"/>
    <property type="evidence" value="ECO:0007669"/>
    <property type="project" value="UniProtKB-ARBA"/>
</dbReference>
<dbReference type="GO" id="GO:0004827">
    <property type="term" value="F:proline-tRNA ligase activity"/>
    <property type="evidence" value="ECO:0007669"/>
    <property type="project" value="UniProtKB-UniRule"/>
</dbReference>
<dbReference type="GO" id="GO:0016740">
    <property type="term" value="F:transferase activity"/>
    <property type="evidence" value="ECO:0007669"/>
    <property type="project" value="UniProtKB-ARBA"/>
</dbReference>
<dbReference type="GO" id="GO:0006433">
    <property type="term" value="P:prolyl-tRNA aminoacylation"/>
    <property type="evidence" value="ECO:0007669"/>
    <property type="project" value="UniProtKB-UniRule"/>
</dbReference>
<dbReference type="CDD" id="cd00862">
    <property type="entry name" value="ProRS_anticodon_zinc"/>
    <property type="match status" value="1"/>
</dbReference>
<dbReference type="CDD" id="cd00778">
    <property type="entry name" value="ProRS_core_arch_euk"/>
    <property type="match status" value="1"/>
</dbReference>
<dbReference type="FunFam" id="3.40.50.800:FF:000005">
    <property type="entry name" value="bifunctional glutamate/proline--tRNA ligase"/>
    <property type="match status" value="1"/>
</dbReference>
<dbReference type="FunFam" id="3.30.930.10:FF:000023">
    <property type="entry name" value="Proline--tRNA ligase"/>
    <property type="match status" value="1"/>
</dbReference>
<dbReference type="Gene3D" id="3.40.50.800">
    <property type="entry name" value="Anticodon-binding domain"/>
    <property type="match status" value="1"/>
</dbReference>
<dbReference type="Gene3D" id="3.30.930.10">
    <property type="entry name" value="Bira Bifunctional Protein, Domain 2"/>
    <property type="match status" value="1"/>
</dbReference>
<dbReference type="Gene3D" id="3.30.110.30">
    <property type="entry name" value="C-terminal domain of ProRS"/>
    <property type="match status" value="1"/>
</dbReference>
<dbReference type="HAMAP" id="MF_01571">
    <property type="entry name" value="Pro_tRNA_synth_type3"/>
    <property type="match status" value="1"/>
</dbReference>
<dbReference type="InterPro" id="IPR002314">
    <property type="entry name" value="aa-tRNA-synt_IIb"/>
</dbReference>
<dbReference type="InterPro" id="IPR006195">
    <property type="entry name" value="aa-tRNA-synth_II"/>
</dbReference>
<dbReference type="InterPro" id="IPR045864">
    <property type="entry name" value="aa-tRNA-synth_II/BPL/LPL"/>
</dbReference>
<dbReference type="InterPro" id="IPR004154">
    <property type="entry name" value="Anticodon-bd"/>
</dbReference>
<dbReference type="InterPro" id="IPR036621">
    <property type="entry name" value="Anticodon-bd_dom_sf"/>
</dbReference>
<dbReference type="InterPro" id="IPR002316">
    <property type="entry name" value="Pro-tRNA-ligase_IIa"/>
</dbReference>
<dbReference type="InterPro" id="IPR004499">
    <property type="entry name" value="Pro-tRNA-ligase_IIa_arc-type"/>
</dbReference>
<dbReference type="InterPro" id="IPR016061">
    <property type="entry name" value="Pro-tRNA_ligase_II_C"/>
</dbReference>
<dbReference type="InterPro" id="IPR017449">
    <property type="entry name" value="Pro-tRNA_synth_II"/>
</dbReference>
<dbReference type="InterPro" id="IPR033721">
    <property type="entry name" value="ProRS_core_arch_euk"/>
</dbReference>
<dbReference type="NCBIfam" id="TIGR00408">
    <property type="entry name" value="proS_fam_I"/>
    <property type="match status" value="1"/>
</dbReference>
<dbReference type="PANTHER" id="PTHR43382:SF2">
    <property type="entry name" value="BIFUNCTIONAL GLUTAMATE_PROLINE--TRNA LIGASE"/>
    <property type="match status" value="1"/>
</dbReference>
<dbReference type="PANTHER" id="PTHR43382">
    <property type="entry name" value="PROLYL-TRNA SYNTHETASE"/>
    <property type="match status" value="1"/>
</dbReference>
<dbReference type="Pfam" id="PF03129">
    <property type="entry name" value="HGTP_anticodon"/>
    <property type="match status" value="1"/>
</dbReference>
<dbReference type="Pfam" id="PF09180">
    <property type="entry name" value="ProRS-C_1"/>
    <property type="match status" value="1"/>
</dbReference>
<dbReference type="Pfam" id="PF00587">
    <property type="entry name" value="tRNA-synt_2b"/>
    <property type="match status" value="1"/>
</dbReference>
<dbReference type="PRINTS" id="PR01046">
    <property type="entry name" value="TRNASYNTHPRO"/>
</dbReference>
<dbReference type="SMART" id="SM00946">
    <property type="entry name" value="ProRS-C_1"/>
    <property type="match status" value="1"/>
</dbReference>
<dbReference type="SUPFAM" id="SSF64586">
    <property type="entry name" value="C-terminal domain of ProRS"/>
    <property type="match status" value="1"/>
</dbReference>
<dbReference type="SUPFAM" id="SSF52954">
    <property type="entry name" value="Class II aaRS ABD-related"/>
    <property type="match status" value="1"/>
</dbReference>
<dbReference type="SUPFAM" id="SSF55681">
    <property type="entry name" value="Class II aaRS and biotin synthetases"/>
    <property type="match status" value="1"/>
</dbReference>
<dbReference type="PROSITE" id="PS50862">
    <property type="entry name" value="AA_TRNA_LIGASE_II"/>
    <property type="match status" value="1"/>
</dbReference>
<reference key="1">
    <citation type="journal article" date="2003" name="Nature">
        <title>The genome sequence of Bacillus anthracis Ames and comparison to closely related bacteria.</title>
        <authorList>
            <person name="Read T.D."/>
            <person name="Peterson S.N."/>
            <person name="Tourasse N.J."/>
            <person name="Baillie L.W."/>
            <person name="Paulsen I.T."/>
            <person name="Nelson K.E."/>
            <person name="Tettelin H."/>
            <person name="Fouts D.E."/>
            <person name="Eisen J.A."/>
            <person name="Gill S.R."/>
            <person name="Holtzapple E.K."/>
            <person name="Okstad O.A."/>
            <person name="Helgason E."/>
            <person name="Rilstone J."/>
            <person name="Wu M."/>
            <person name="Kolonay J.F."/>
            <person name="Beanan M.J."/>
            <person name="Dodson R.J."/>
            <person name="Brinkac L.M."/>
            <person name="Gwinn M.L."/>
            <person name="DeBoy R.T."/>
            <person name="Madpu R."/>
            <person name="Daugherty S.C."/>
            <person name="Durkin A.S."/>
            <person name="Haft D.H."/>
            <person name="Nelson W.C."/>
            <person name="Peterson J.D."/>
            <person name="Pop M."/>
            <person name="Khouri H.M."/>
            <person name="Radune D."/>
            <person name="Benton J.L."/>
            <person name="Mahamoud Y."/>
            <person name="Jiang L."/>
            <person name="Hance I.R."/>
            <person name="Weidman J.F."/>
            <person name="Berry K.J."/>
            <person name="Plaut R.D."/>
            <person name="Wolf A.M."/>
            <person name="Watkins K.L."/>
            <person name="Nierman W.C."/>
            <person name="Hazen A."/>
            <person name="Cline R.T."/>
            <person name="Redmond C."/>
            <person name="Thwaite J.E."/>
            <person name="White O."/>
            <person name="Salzberg S.L."/>
            <person name="Thomason B."/>
            <person name="Friedlander A.M."/>
            <person name="Koehler T.M."/>
            <person name="Hanna P.C."/>
            <person name="Kolstoe A.-B."/>
            <person name="Fraser C.M."/>
        </authorList>
    </citation>
    <scope>NUCLEOTIDE SEQUENCE [LARGE SCALE GENOMIC DNA]</scope>
    <source>
        <strain>Ames / isolate Porton</strain>
    </source>
</reference>
<reference key="2">
    <citation type="submission" date="2004-01" db="EMBL/GenBank/DDBJ databases">
        <title>Complete genome sequence of Bacillus anthracis Sterne.</title>
        <authorList>
            <person name="Brettin T.S."/>
            <person name="Bruce D."/>
            <person name="Challacombe J.F."/>
            <person name="Gilna P."/>
            <person name="Han C."/>
            <person name="Hill K."/>
            <person name="Hitchcock P."/>
            <person name="Jackson P."/>
            <person name="Keim P."/>
            <person name="Longmire J."/>
            <person name="Lucas S."/>
            <person name="Okinaka R."/>
            <person name="Richardson P."/>
            <person name="Rubin E."/>
            <person name="Tice H."/>
        </authorList>
    </citation>
    <scope>NUCLEOTIDE SEQUENCE [LARGE SCALE GENOMIC DNA]</scope>
    <source>
        <strain>Sterne</strain>
    </source>
</reference>
<reference key="3">
    <citation type="journal article" date="2009" name="J. Bacteriol.">
        <title>The complete genome sequence of Bacillus anthracis Ames 'Ancestor'.</title>
        <authorList>
            <person name="Ravel J."/>
            <person name="Jiang L."/>
            <person name="Stanley S.T."/>
            <person name="Wilson M.R."/>
            <person name="Decker R.S."/>
            <person name="Read T.D."/>
            <person name="Worsham P."/>
            <person name="Keim P.S."/>
            <person name="Salzberg S.L."/>
            <person name="Fraser-Liggett C.M."/>
            <person name="Rasko D.A."/>
        </authorList>
    </citation>
    <scope>NUCLEOTIDE SEQUENCE [LARGE SCALE GENOMIC DNA]</scope>
    <source>
        <strain>Ames ancestor</strain>
    </source>
</reference>